<evidence type="ECO:0000255" key="1">
    <source>
        <dbReference type="HAMAP-Rule" id="MF_01551"/>
    </source>
</evidence>
<name>RLMM_ECOLC</name>
<comment type="function">
    <text evidence="1">Catalyzes the 2'-O-methylation at nucleotide C2498 in 23S rRNA.</text>
</comment>
<comment type="catalytic activity">
    <reaction evidence="1">
        <text>cytidine(2498) in 23S rRNA + S-adenosyl-L-methionine = 2'-O-methylcytidine(2498) in 23S rRNA + S-adenosyl-L-homocysteine + H(+)</text>
        <dbReference type="Rhea" id="RHEA:42788"/>
        <dbReference type="Rhea" id="RHEA-COMP:10244"/>
        <dbReference type="Rhea" id="RHEA-COMP:10245"/>
        <dbReference type="ChEBI" id="CHEBI:15378"/>
        <dbReference type="ChEBI" id="CHEBI:57856"/>
        <dbReference type="ChEBI" id="CHEBI:59789"/>
        <dbReference type="ChEBI" id="CHEBI:74495"/>
        <dbReference type="ChEBI" id="CHEBI:82748"/>
        <dbReference type="EC" id="2.1.1.186"/>
    </reaction>
</comment>
<comment type="subunit">
    <text evidence="1">Monomer.</text>
</comment>
<comment type="subcellular location">
    <subcellularLocation>
        <location evidence="1">Cytoplasm</location>
    </subcellularLocation>
</comment>
<comment type="similarity">
    <text evidence="1">Belongs to the class I-like SAM-binding methyltransferase superfamily. RNA methyltransferase RlmE family. RlmM subfamily.</text>
</comment>
<organism>
    <name type="scientific">Escherichia coli (strain ATCC 8739 / DSM 1576 / NBRC 3972 / NCIMB 8545 / WDCM 00012 / Crooks)</name>
    <dbReference type="NCBI Taxonomy" id="481805"/>
    <lineage>
        <taxon>Bacteria</taxon>
        <taxon>Pseudomonadati</taxon>
        <taxon>Pseudomonadota</taxon>
        <taxon>Gammaproteobacteria</taxon>
        <taxon>Enterobacterales</taxon>
        <taxon>Enterobacteriaceae</taxon>
        <taxon>Escherichia</taxon>
    </lineage>
</organism>
<accession>B1IU35</accession>
<keyword id="KW-0963">Cytoplasm</keyword>
<keyword id="KW-0489">Methyltransferase</keyword>
<keyword id="KW-0698">rRNA processing</keyword>
<keyword id="KW-0949">S-adenosyl-L-methionine</keyword>
<keyword id="KW-0808">Transferase</keyword>
<protein>
    <recommendedName>
        <fullName evidence="1">Ribosomal RNA large subunit methyltransferase M</fullName>
        <ecNumber evidence="1">2.1.1.186</ecNumber>
    </recommendedName>
    <alternativeName>
        <fullName evidence="1">23S rRNA (cytidine2498-2'-O)-methyltransferase</fullName>
    </alternativeName>
    <alternativeName>
        <fullName evidence="1">23S rRNA 2'-O-ribose methyltransferase RlmM</fullName>
    </alternativeName>
</protein>
<feature type="chain" id="PRO_1000087733" description="Ribosomal RNA large subunit methyltransferase M">
    <location>
        <begin position="1"/>
        <end position="366"/>
    </location>
</feature>
<feature type="active site" description="Proton acceptor" evidence="1">
    <location>
        <position position="306"/>
    </location>
</feature>
<feature type="binding site" evidence="1">
    <location>
        <position position="188"/>
    </location>
    <ligand>
        <name>S-adenosyl-L-methionine</name>
        <dbReference type="ChEBI" id="CHEBI:59789"/>
    </ligand>
</feature>
<feature type="binding site" evidence="1">
    <location>
        <begin position="221"/>
        <end position="224"/>
    </location>
    <ligand>
        <name>S-adenosyl-L-methionine</name>
        <dbReference type="ChEBI" id="CHEBI:59789"/>
    </ligand>
</feature>
<feature type="binding site" evidence="1">
    <location>
        <position position="240"/>
    </location>
    <ligand>
        <name>S-adenosyl-L-methionine</name>
        <dbReference type="ChEBI" id="CHEBI:59789"/>
    </ligand>
</feature>
<feature type="binding site" evidence="1">
    <location>
        <position position="260"/>
    </location>
    <ligand>
        <name>S-adenosyl-L-methionine</name>
        <dbReference type="ChEBI" id="CHEBI:59789"/>
    </ligand>
</feature>
<feature type="binding site" evidence="1">
    <location>
        <position position="277"/>
    </location>
    <ligand>
        <name>S-adenosyl-L-methionine</name>
        <dbReference type="ChEBI" id="CHEBI:59789"/>
    </ligand>
</feature>
<reference key="1">
    <citation type="submission" date="2008-02" db="EMBL/GenBank/DDBJ databases">
        <title>Complete sequence of Escherichia coli C str. ATCC 8739.</title>
        <authorList>
            <person name="Copeland A."/>
            <person name="Lucas S."/>
            <person name="Lapidus A."/>
            <person name="Glavina del Rio T."/>
            <person name="Dalin E."/>
            <person name="Tice H."/>
            <person name="Bruce D."/>
            <person name="Goodwin L."/>
            <person name="Pitluck S."/>
            <person name="Kiss H."/>
            <person name="Brettin T."/>
            <person name="Detter J.C."/>
            <person name="Han C."/>
            <person name="Kuske C.R."/>
            <person name="Schmutz J."/>
            <person name="Larimer F."/>
            <person name="Land M."/>
            <person name="Hauser L."/>
            <person name="Kyrpides N."/>
            <person name="Mikhailova N."/>
            <person name="Ingram L."/>
            <person name="Richardson P."/>
        </authorList>
    </citation>
    <scope>NUCLEOTIDE SEQUENCE [LARGE SCALE GENOMIC DNA]</scope>
    <source>
        <strain>ATCC 8739 / DSM 1576 / NBRC 3972 / NCIMB 8545 / WDCM 00012 / Crooks</strain>
    </source>
</reference>
<gene>
    <name evidence="1" type="primary">rlmM</name>
    <name type="ordered locus">EcolC_0906</name>
</gene>
<dbReference type="EC" id="2.1.1.186" evidence="1"/>
<dbReference type="EMBL" id="CP000946">
    <property type="protein sequence ID" value="ACA76575.1"/>
    <property type="molecule type" value="Genomic_DNA"/>
</dbReference>
<dbReference type="RefSeq" id="WP_001045520.1">
    <property type="nucleotide sequence ID" value="NZ_MTFT01000004.1"/>
</dbReference>
<dbReference type="SMR" id="B1IU35"/>
<dbReference type="GeneID" id="75203803"/>
<dbReference type="KEGG" id="ecl:EcolC_0906"/>
<dbReference type="HOGENOM" id="CLU_043780_0_0_6"/>
<dbReference type="GO" id="GO:0005737">
    <property type="term" value="C:cytoplasm"/>
    <property type="evidence" value="ECO:0007669"/>
    <property type="project" value="UniProtKB-SubCell"/>
</dbReference>
<dbReference type="GO" id="GO:0008757">
    <property type="term" value="F:S-adenosylmethionine-dependent methyltransferase activity"/>
    <property type="evidence" value="ECO:0007669"/>
    <property type="project" value="UniProtKB-UniRule"/>
</dbReference>
<dbReference type="GO" id="GO:0032259">
    <property type="term" value="P:methylation"/>
    <property type="evidence" value="ECO:0007669"/>
    <property type="project" value="UniProtKB-KW"/>
</dbReference>
<dbReference type="GO" id="GO:0006364">
    <property type="term" value="P:rRNA processing"/>
    <property type="evidence" value="ECO:0007669"/>
    <property type="project" value="UniProtKB-UniRule"/>
</dbReference>
<dbReference type="FunFam" id="3.30.2300.20:FF:000001">
    <property type="entry name" value="Ribosomal RNA large subunit methyltransferase M"/>
    <property type="match status" value="1"/>
</dbReference>
<dbReference type="FunFam" id="3.30.70.2810:FF:000001">
    <property type="entry name" value="Ribosomal RNA large subunit methyltransferase M"/>
    <property type="match status" value="1"/>
</dbReference>
<dbReference type="FunFam" id="3.40.50.150:FF:000020">
    <property type="entry name" value="Ribosomal RNA large subunit methyltransferase M"/>
    <property type="match status" value="1"/>
</dbReference>
<dbReference type="Gene3D" id="3.30.2300.20">
    <property type="match status" value="1"/>
</dbReference>
<dbReference type="Gene3D" id="3.30.70.2810">
    <property type="match status" value="1"/>
</dbReference>
<dbReference type="Gene3D" id="3.40.50.150">
    <property type="entry name" value="Vaccinia Virus protein VP39"/>
    <property type="match status" value="1"/>
</dbReference>
<dbReference type="HAMAP" id="MF_01551">
    <property type="entry name" value="23SrRNA_methyltr_M"/>
    <property type="match status" value="1"/>
</dbReference>
<dbReference type="InterPro" id="IPR040739">
    <property type="entry name" value="RlmM_FDX"/>
</dbReference>
<dbReference type="InterPro" id="IPR048646">
    <property type="entry name" value="RlmM_THUMP-like"/>
</dbReference>
<dbReference type="InterPro" id="IPR002877">
    <property type="entry name" value="RNA_MeTrfase_FtsJ_dom"/>
</dbReference>
<dbReference type="InterPro" id="IPR011224">
    <property type="entry name" value="rRNA_MeTrfase_M"/>
</dbReference>
<dbReference type="InterPro" id="IPR029063">
    <property type="entry name" value="SAM-dependent_MTases_sf"/>
</dbReference>
<dbReference type="NCBIfam" id="NF008734">
    <property type="entry name" value="PRK11760.1"/>
    <property type="match status" value="1"/>
</dbReference>
<dbReference type="PANTHER" id="PTHR37524">
    <property type="entry name" value="RIBOSOMAL RNA LARGE SUBUNIT METHYLTRANSFERASE M"/>
    <property type="match status" value="1"/>
</dbReference>
<dbReference type="PANTHER" id="PTHR37524:SF2">
    <property type="entry name" value="RIBOSOMAL RNA METHYLTRANSFERASE FTSJ DOMAIN-CONTAINING PROTEIN"/>
    <property type="match status" value="1"/>
</dbReference>
<dbReference type="Pfam" id="PF01728">
    <property type="entry name" value="FtsJ"/>
    <property type="match status" value="1"/>
</dbReference>
<dbReference type="Pfam" id="PF18125">
    <property type="entry name" value="RlmM_FDX"/>
    <property type="match status" value="1"/>
</dbReference>
<dbReference type="Pfam" id="PF21239">
    <property type="entry name" value="RLMM_N"/>
    <property type="match status" value="1"/>
</dbReference>
<dbReference type="PIRSF" id="PIRSF028774">
    <property type="entry name" value="UCP028774"/>
    <property type="match status" value="1"/>
</dbReference>
<dbReference type="SUPFAM" id="SSF53335">
    <property type="entry name" value="S-adenosyl-L-methionine-dependent methyltransferases"/>
    <property type="match status" value="1"/>
</dbReference>
<sequence>MNKVVLLCRPGFEKECAAEITDKAGQREIFGFARVKENAGYVIYECYQPDDGDKLIRELPFSSLIFARQWFVVGELLQHLPPEDRITPIVGMLQGVVEKGGELRVEVADTNESKELLKFCRKFTVPLRAALRDAGVLANYETPKRPVVHVFFIAPGCCYTGYSYSNNNSPFYMGIPRLKFPADAPSRSTLKLEEAFHVFIPADEWDERLANGMWAVDLGACPGGWTYQLVKRNMWVYSVDNGPMAQSLMDTGQVTWLREDGFKFRPTRSNISWMVCDMVEKPAKVAALMAQWLVNGWCRETIFNLKLPMKKRYEEVSHNLAYIQAQLDEHGINAQIQARQLYHDREEVTVHVRRIWAAVGGRRDER</sequence>
<proteinExistence type="inferred from homology"/>